<comment type="function">
    <text evidence="2 3">Cytokine that binds to TNFRSF1A/TNFR1 and TNFRSF1B/TNFBR. It is mainly secreted by macrophages and can induce cell death of certain tumor cell lines. It is potent pyrogen causing fever by direct action or by stimulation of interleukin-1 secretion and is implicated in the induction of cachexia, Under certain conditions it can stimulate cell proliferation and induce cell differentiation (By similarity). Induces insulin resistance in adipocytes via inhibition of insulin-induced IRS1 tyrosine phosphorylation and insulin-induced glucose uptake. Induces GKAP42 protein degradation in adipocytes which is partially responsible for TNF-induced insulin resistance (By similarity). Plays a role in angiogenesis by inducing VEGF production synergistically with IL1B and IL6 (By similarity). Promotes osteoclastogenesis and therefore mediates bone resorption (By similarity).</text>
</comment>
<comment type="function">
    <text evidence="2">The TNF intracellular domain (ICD) form induces IL12 production in dendritic cells.</text>
</comment>
<comment type="subunit">
    <text evidence="1">Homotrimer. Interacts with SPPL2B (By similarity).</text>
</comment>
<comment type="subcellular location">
    <subcellularLocation>
        <location evidence="1">Cell membrane</location>
        <topology evidence="1">Single-pass type II membrane protein</topology>
    </subcellularLocation>
</comment>
<comment type="subcellular location">
    <molecule>Tumor necrosis factor, membrane form</molecule>
    <subcellularLocation>
        <location evidence="1">Membrane</location>
        <topology evidence="1">Single-pass type II membrane protein</topology>
    </subcellularLocation>
</comment>
<comment type="subcellular location">
    <molecule>Tumor necrosis factor, soluble form</molecule>
    <subcellularLocation>
        <location evidence="1">Secreted</location>
    </subcellularLocation>
</comment>
<comment type="subcellular location">
    <molecule>C-domain 1</molecule>
    <subcellularLocation>
        <location evidence="1">Secreted</location>
    </subcellularLocation>
</comment>
<comment type="subcellular location">
    <molecule>C-domain 2</molecule>
    <subcellularLocation>
        <location evidence="1">Secreted</location>
    </subcellularLocation>
</comment>
<comment type="PTM">
    <text evidence="1">The soluble form derives from the membrane form by proteolytic processing. The membrane-bound form is further proteolytically processed by SPPL2A or SPPL2B through regulated intramembrane proteolysis producing TNF intracellular domains (ICD1 and ICD2) released in the cytosol and TNF C-domain 1 and C-domain 2 secreted into the extracellular space (By similarity).</text>
</comment>
<comment type="PTM">
    <text evidence="1">The membrane form, but not the soluble form, is phosphorylated on serine residues. Dephosphorylation of the membrane form occurs by binding to soluble TNFRSF1A/TNFR1 (By similarity).</text>
</comment>
<comment type="PTM">
    <text evidence="1">O-glycosylated; glycans contain galactose, N-acetylgalactosamine and N-acetylneuraminic acid.</text>
</comment>
<comment type="PTM">
    <molecule>Tumor necrosis factor, soluble form</molecule>
    <text evidence="2">The soluble form is demyristoylated by SIRT6, promoting its secretion.</text>
</comment>
<comment type="similarity">
    <text evidence="6">Belongs to the tumor necrosis factor family.</text>
</comment>
<accession>P59684</accession>
<keyword id="KW-1003">Cell membrane</keyword>
<keyword id="KW-0202">Cytokine</keyword>
<keyword id="KW-1015">Disulfide bond</keyword>
<keyword id="KW-0325">Glycoprotein</keyword>
<keyword id="KW-0449">Lipoprotein</keyword>
<keyword id="KW-0472">Membrane</keyword>
<keyword id="KW-0519">Myristate</keyword>
<keyword id="KW-0597">Phosphoprotein</keyword>
<keyword id="KW-0964">Secreted</keyword>
<keyword id="KW-0735">Signal-anchor</keyword>
<keyword id="KW-0812">Transmembrane</keyword>
<keyword id="KW-1133">Transmembrane helix</keyword>
<reference key="1">
    <citation type="journal article" date="2004" name="Eur. J. Immunogenet.">
        <title>High nucleotide and amino acid sequence similarities in tumour necrosis factor-alpha amongst Indian buffalo (Bubalus bubalis), Indian cattle (Bos indicus) and other ruminants.</title>
        <authorList>
            <person name="Gupta P.K."/>
            <person name="Bind R.B."/>
            <person name="Walunj S.S."/>
            <person name="Saini M."/>
        </authorList>
    </citation>
    <scope>NUCLEOTIDE SEQUENCE [MRNA]</scope>
</reference>
<name>TNFA_BOSIN</name>
<feature type="chain" id="PRO_0000034401" description="Tumor necrosis factor, membrane form">
    <location>
        <begin position="1"/>
        <end position="234"/>
    </location>
</feature>
<feature type="chain" id="PRO_0000417171" description="Intracellular domain 1" evidence="1">
    <location>
        <begin position="1"/>
        <end position="39"/>
    </location>
</feature>
<feature type="chain" id="PRO_0000417172" description="Intracellular domain 2" evidence="1">
    <location>
        <begin position="1"/>
        <end position="35"/>
    </location>
</feature>
<feature type="chain" id="PRO_0000417173" description="C-domain 1" evidence="1">
    <location>
        <begin position="50"/>
        <end status="unknown"/>
    </location>
</feature>
<feature type="chain" id="PRO_0000417174" description="C-domain 2" evidence="1">
    <location>
        <begin position="52"/>
        <end status="unknown"/>
    </location>
</feature>
<feature type="chain" id="PRO_0000034402" description="Tumor necrosis factor, soluble form" evidence="1">
    <location>
        <begin position="78"/>
        <end position="234"/>
    </location>
</feature>
<feature type="topological domain" description="Cytoplasmic" evidence="4">
    <location>
        <begin position="1"/>
        <end position="33"/>
    </location>
</feature>
<feature type="transmembrane region" description="Helical; Signal-anchor for type II membrane protein" evidence="1">
    <location>
        <begin position="34"/>
        <end position="56"/>
    </location>
</feature>
<feature type="topological domain" description="Extracellular" evidence="4">
    <location>
        <begin position="57"/>
        <end position="234"/>
    </location>
</feature>
<feature type="domain" description="THD" evidence="5">
    <location>
        <begin position="89"/>
        <end position="234"/>
    </location>
</feature>
<feature type="site" description="Cleavage; by SPPL2A or SPPL2B" evidence="1">
    <location>
        <begin position="34"/>
        <end position="35"/>
    </location>
</feature>
<feature type="site" description="Cleavage; by SPPL2A or SPPL2B" evidence="1">
    <location>
        <begin position="39"/>
        <end position="40"/>
    </location>
</feature>
<feature type="site" description="Cleavage; by SPPL2A or SPPL2B" evidence="1">
    <location>
        <begin position="49"/>
        <end position="50"/>
    </location>
</feature>
<feature type="site" description="Cleavage; by SPPL2A or SPPL2B" evidence="1">
    <location>
        <begin position="51"/>
        <end position="52"/>
    </location>
</feature>
<feature type="site" description="Cleavage; by ADAM17" evidence="1">
    <location>
        <begin position="77"/>
        <end position="78"/>
    </location>
</feature>
<feature type="modified residue" description="Phosphoserine; by CK1" evidence="1">
    <location>
        <position position="2"/>
    </location>
</feature>
<feature type="lipid moiety-binding region" description="N6-myristoyl lysine" evidence="2">
    <location>
        <position position="20"/>
    </location>
</feature>
<feature type="glycosylation site" description="O-linked (GalNAc...) serine; in soluble form" evidence="1">
    <location>
        <position position="81"/>
    </location>
</feature>
<feature type="disulfide bond" evidence="5">
    <location>
        <begin position="146"/>
        <end position="178"/>
    </location>
</feature>
<gene>
    <name type="primary">TNF</name>
    <name type="synonym">TNFA</name>
    <name type="synonym">TNFSF2</name>
</gene>
<dbReference type="EMBL" id="AY221122">
    <property type="protein sequence ID" value="AAO62081.1"/>
    <property type="molecule type" value="mRNA"/>
</dbReference>
<dbReference type="RefSeq" id="XP_019841916.2">
    <property type="nucleotide sequence ID" value="XM_019986357.2"/>
</dbReference>
<dbReference type="SMR" id="P59684"/>
<dbReference type="GlyCosmos" id="P59684">
    <property type="glycosylation" value="1 site, No reported glycans"/>
</dbReference>
<dbReference type="GeneID" id="109577428"/>
<dbReference type="GO" id="GO:0009986">
    <property type="term" value="C:cell surface"/>
    <property type="evidence" value="ECO:0007669"/>
    <property type="project" value="TreeGrafter"/>
</dbReference>
<dbReference type="GO" id="GO:0005615">
    <property type="term" value="C:extracellular space"/>
    <property type="evidence" value="ECO:0007669"/>
    <property type="project" value="UniProtKB-KW"/>
</dbReference>
<dbReference type="GO" id="GO:0005886">
    <property type="term" value="C:plasma membrane"/>
    <property type="evidence" value="ECO:0007669"/>
    <property type="project" value="UniProtKB-SubCell"/>
</dbReference>
<dbReference type="GO" id="GO:0005125">
    <property type="term" value="F:cytokine activity"/>
    <property type="evidence" value="ECO:0007669"/>
    <property type="project" value="UniProtKB-KW"/>
</dbReference>
<dbReference type="GO" id="GO:0005164">
    <property type="term" value="F:tumor necrosis factor receptor binding"/>
    <property type="evidence" value="ECO:0007669"/>
    <property type="project" value="InterPro"/>
</dbReference>
<dbReference type="GO" id="GO:0008625">
    <property type="term" value="P:extrinsic apoptotic signaling pathway via death domain receptors"/>
    <property type="evidence" value="ECO:0007669"/>
    <property type="project" value="TreeGrafter"/>
</dbReference>
<dbReference type="GO" id="GO:0006955">
    <property type="term" value="P:immune response"/>
    <property type="evidence" value="ECO:0007669"/>
    <property type="project" value="InterPro"/>
</dbReference>
<dbReference type="GO" id="GO:0097527">
    <property type="term" value="P:necroptotic signaling pathway"/>
    <property type="evidence" value="ECO:0000250"/>
    <property type="project" value="CAFA"/>
</dbReference>
<dbReference type="GO" id="GO:0043242">
    <property type="term" value="P:negative regulation of protein-containing complex disassembly"/>
    <property type="evidence" value="ECO:0000250"/>
    <property type="project" value="UniProtKB"/>
</dbReference>
<dbReference type="GO" id="GO:0043065">
    <property type="term" value="P:positive regulation of apoptotic process"/>
    <property type="evidence" value="ECO:0000250"/>
    <property type="project" value="UniProtKB"/>
</dbReference>
<dbReference type="GO" id="GO:0043123">
    <property type="term" value="P:positive regulation of canonical NF-kappaB signal transduction"/>
    <property type="evidence" value="ECO:0007669"/>
    <property type="project" value="TreeGrafter"/>
</dbReference>
<dbReference type="GO" id="GO:2001238">
    <property type="term" value="P:positive regulation of extrinsic apoptotic signaling pathway"/>
    <property type="evidence" value="ECO:0007669"/>
    <property type="project" value="TreeGrafter"/>
</dbReference>
<dbReference type="GO" id="GO:0043507">
    <property type="term" value="P:positive regulation of JUN kinase activity"/>
    <property type="evidence" value="ECO:0000250"/>
    <property type="project" value="UniProtKB"/>
</dbReference>
<dbReference type="GO" id="GO:0043406">
    <property type="term" value="P:positive regulation of MAP kinase activity"/>
    <property type="evidence" value="ECO:0000250"/>
    <property type="project" value="UniProtKB"/>
</dbReference>
<dbReference type="GO" id="GO:0051092">
    <property type="term" value="P:positive regulation of NF-kappaB transcription factor activity"/>
    <property type="evidence" value="ECO:0000250"/>
    <property type="project" value="UniProtKB"/>
</dbReference>
<dbReference type="GO" id="GO:0001934">
    <property type="term" value="P:positive regulation of protein phosphorylation"/>
    <property type="evidence" value="ECO:0000250"/>
    <property type="project" value="UniProtKB"/>
</dbReference>
<dbReference type="GO" id="GO:0043243">
    <property type="term" value="P:positive regulation of protein-containing complex disassembly"/>
    <property type="evidence" value="ECO:0000250"/>
    <property type="project" value="UniProtKB"/>
</dbReference>
<dbReference type="GO" id="GO:0045944">
    <property type="term" value="P:positive regulation of transcription by RNA polymerase II"/>
    <property type="evidence" value="ECO:0007669"/>
    <property type="project" value="TreeGrafter"/>
</dbReference>
<dbReference type="GO" id="GO:0065008">
    <property type="term" value="P:regulation of biological quality"/>
    <property type="evidence" value="ECO:0007669"/>
    <property type="project" value="UniProtKB-ARBA"/>
</dbReference>
<dbReference type="GO" id="GO:0050793">
    <property type="term" value="P:regulation of developmental process"/>
    <property type="evidence" value="ECO:0007669"/>
    <property type="project" value="UniProtKB-ARBA"/>
</dbReference>
<dbReference type="GO" id="GO:0051239">
    <property type="term" value="P:regulation of multicellular organismal process"/>
    <property type="evidence" value="ECO:0007669"/>
    <property type="project" value="UniProtKB-ARBA"/>
</dbReference>
<dbReference type="GO" id="GO:0051046">
    <property type="term" value="P:regulation of secretion"/>
    <property type="evidence" value="ECO:0007669"/>
    <property type="project" value="UniProtKB-ARBA"/>
</dbReference>
<dbReference type="GO" id="GO:0033209">
    <property type="term" value="P:tumor necrosis factor-mediated signaling pathway"/>
    <property type="evidence" value="ECO:0007669"/>
    <property type="project" value="TreeGrafter"/>
</dbReference>
<dbReference type="GO" id="GO:0010573">
    <property type="term" value="P:vascular endothelial growth factor production"/>
    <property type="evidence" value="ECO:0000250"/>
    <property type="project" value="UniProtKB"/>
</dbReference>
<dbReference type="CDD" id="cd00184">
    <property type="entry name" value="TNF"/>
    <property type="match status" value="1"/>
</dbReference>
<dbReference type="FunFam" id="2.60.120.40:FF:000007">
    <property type="entry name" value="Tumor necrosis factor"/>
    <property type="match status" value="1"/>
</dbReference>
<dbReference type="Gene3D" id="2.60.120.40">
    <property type="match status" value="1"/>
</dbReference>
<dbReference type="InterPro" id="IPR006053">
    <property type="entry name" value="TNF"/>
</dbReference>
<dbReference type="InterPro" id="IPR002959">
    <property type="entry name" value="TNF_alpha"/>
</dbReference>
<dbReference type="InterPro" id="IPR021184">
    <property type="entry name" value="TNF_CS"/>
</dbReference>
<dbReference type="InterPro" id="IPR006052">
    <property type="entry name" value="TNF_dom"/>
</dbReference>
<dbReference type="InterPro" id="IPR008983">
    <property type="entry name" value="Tumour_necrosis_fac-like_dom"/>
</dbReference>
<dbReference type="PANTHER" id="PTHR11471:SF23">
    <property type="entry name" value="TUMOR NECROSIS FACTOR"/>
    <property type="match status" value="1"/>
</dbReference>
<dbReference type="PANTHER" id="PTHR11471">
    <property type="entry name" value="TUMOR NECROSIS FACTOR FAMILY MEMBER"/>
    <property type="match status" value="1"/>
</dbReference>
<dbReference type="Pfam" id="PF00229">
    <property type="entry name" value="TNF"/>
    <property type="match status" value="1"/>
</dbReference>
<dbReference type="PRINTS" id="PR01234">
    <property type="entry name" value="TNECROSISFCT"/>
</dbReference>
<dbReference type="PRINTS" id="PR01235">
    <property type="entry name" value="TNFALPHA"/>
</dbReference>
<dbReference type="SMART" id="SM00207">
    <property type="entry name" value="TNF"/>
    <property type="match status" value="1"/>
</dbReference>
<dbReference type="SUPFAM" id="SSF49842">
    <property type="entry name" value="TNF-like"/>
    <property type="match status" value="1"/>
</dbReference>
<dbReference type="PROSITE" id="PS00251">
    <property type="entry name" value="THD_1"/>
    <property type="match status" value="1"/>
</dbReference>
<dbReference type="PROSITE" id="PS50049">
    <property type="entry name" value="THD_2"/>
    <property type="match status" value="1"/>
</dbReference>
<protein>
    <recommendedName>
        <fullName>Tumor necrosis factor</fullName>
    </recommendedName>
    <alternativeName>
        <fullName>Cachectin</fullName>
    </alternativeName>
    <alternativeName>
        <fullName>TNF-alpha</fullName>
    </alternativeName>
    <alternativeName>
        <fullName>Tumor necrosis factor ligand superfamily member 2</fullName>
        <shortName>TNF-a</shortName>
    </alternativeName>
    <component>
        <recommendedName>
            <fullName>Tumor necrosis factor, membrane form</fullName>
        </recommendedName>
        <alternativeName>
            <fullName>N-terminal fragment</fullName>
            <shortName>NTF</shortName>
        </alternativeName>
    </component>
    <component>
        <recommendedName>
            <fullName>Intracellular domain 1</fullName>
            <shortName>ICD1</shortName>
        </recommendedName>
    </component>
    <component>
        <recommendedName>
            <fullName>Intracellular domain 2</fullName>
            <shortName>ICD2</shortName>
        </recommendedName>
    </component>
    <component>
        <recommendedName>
            <fullName>C-domain 1</fullName>
        </recommendedName>
    </component>
    <component>
        <recommendedName>
            <fullName>C-domain 2</fullName>
        </recommendedName>
    </component>
    <component>
        <recommendedName>
            <fullName>Tumor necrosis factor, soluble form</fullName>
        </recommendedName>
    </component>
</protein>
<sequence length="234" mass="25567">MSTKSMIRDVELAEEVLSEKAGGPQGSRSCLCLSLFSFLLVAGATTLFCLLHFGVIGPQREEQSPGGPSINSPLVQTLRSSSQASSNKPVAHVVADINSPGQLRWWDSYANALMANGVKLEDNQLVVPADGLYLIYSQVLFRGQGCPSTPLFLTHTISRIAVSYQTKVNILSAIKSPCHRETPEWAEAKPWYEPIYQGGVFQLEKGDRLSAEINLPDYLDYAESGQVYFGIIAL</sequence>
<proteinExistence type="evidence at transcript level"/>
<organism>
    <name type="scientific">Bos indicus</name>
    <name type="common">Zebu</name>
    <dbReference type="NCBI Taxonomy" id="9915"/>
    <lineage>
        <taxon>Eukaryota</taxon>
        <taxon>Metazoa</taxon>
        <taxon>Chordata</taxon>
        <taxon>Craniata</taxon>
        <taxon>Vertebrata</taxon>
        <taxon>Euteleostomi</taxon>
        <taxon>Mammalia</taxon>
        <taxon>Eutheria</taxon>
        <taxon>Laurasiatheria</taxon>
        <taxon>Artiodactyla</taxon>
        <taxon>Ruminantia</taxon>
        <taxon>Pecora</taxon>
        <taxon>Bovidae</taxon>
        <taxon>Bovinae</taxon>
        <taxon>Bos</taxon>
    </lineage>
</organism>
<evidence type="ECO:0000250" key="1"/>
<evidence type="ECO:0000250" key="2">
    <source>
        <dbReference type="UniProtKB" id="P01375"/>
    </source>
</evidence>
<evidence type="ECO:0000250" key="3">
    <source>
        <dbReference type="UniProtKB" id="P06804"/>
    </source>
</evidence>
<evidence type="ECO:0000255" key="4"/>
<evidence type="ECO:0000255" key="5">
    <source>
        <dbReference type="PROSITE-ProRule" id="PRU01387"/>
    </source>
</evidence>
<evidence type="ECO:0000305" key="6"/>